<accession>Q8AWX7</accession>
<comment type="function">
    <text evidence="6 7">Inhibits ADP-induced human platelet aggregation, inhibits bovine aortic endothelial cells (BAEC) migration, has anti-angiogenic activity and induces BAEC and human micro-vascular endothelial cell (HMEC) apoptosis. The metalloproteinase domain may act in hemorrhage.</text>
</comment>
<comment type="cofactor">
    <cofactor evidence="1">
        <name>Zn(2+)</name>
        <dbReference type="ChEBI" id="CHEBI:29105"/>
    </cofactor>
    <text evidence="1">Binds 1 zinc ion per subunit.</text>
</comment>
<comment type="subunit">
    <text evidence="1">Monomer.</text>
</comment>
<comment type="subcellular location">
    <subcellularLocation>
        <location evidence="9">Secreted</location>
    </subcellularLocation>
</comment>
<comment type="tissue specificity">
    <text evidence="9">Expressed by the venom gland.</text>
</comment>
<comment type="miscellaneous">
    <text>The disintegrin domain belongs to the long disintegrin subfamily.</text>
</comment>
<comment type="similarity">
    <text evidence="8">Belongs to the venom metalloproteinase (M12B) family. P-II subfamily. P-IIb sub-subfamily.</text>
</comment>
<comment type="caution">
    <text evidence="8">This protein does probably not undergo proteolytic processing to release the disintegrin domain.</text>
</comment>
<dbReference type="EC" id="3.4.24.-"/>
<dbReference type="EMBL" id="AY071905">
    <property type="protein sequence ID" value="AAL60587.1"/>
    <property type="molecule type" value="mRNA"/>
</dbReference>
<dbReference type="SMR" id="Q8AWX7"/>
<dbReference type="MEROPS" id="M12.313"/>
<dbReference type="GO" id="GO:0005576">
    <property type="term" value="C:extracellular region"/>
    <property type="evidence" value="ECO:0007669"/>
    <property type="project" value="UniProtKB-SubCell"/>
</dbReference>
<dbReference type="GO" id="GO:0005886">
    <property type="term" value="C:plasma membrane"/>
    <property type="evidence" value="ECO:0007669"/>
    <property type="project" value="TreeGrafter"/>
</dbReference>
<dbReference type="GO" id="GO:0046872">
    <property type="term" value="F:metal ion binding"/>
    <property type="evidence" value="ECO:0007669"/>
    <property type="project" value="UniProtKB-KW"/>
</dbReference>
<dbReference type="GO" id="GO:0004222">
    <property type="term" value="F:metalloendopeptidase activity"/>
    <property type="evidence" value="ECO:0007669"/>
    <property type="project" value="InterPro"/>
</dbReference>
<dbReference type="GO" id="GO:0090729">
    <property type="term" value="F:toxin activity"/>
    <property type="evidence" value="ECO:0007669"/>
    <property type="project" value="UniProtKB-KW"/>
</dbReference>
<dbReference type="GO" id="GO:0001525">
    <property type="term" value="P:angiogenesis"/>
    <property type="evidence" value="ECO:0007669"/>
    <property type="project" value="UniProtKB-KW"/>
</dbReference>
<dbReference type="GO" id="GO:0006915">
    <property type="term" value="P:apoptotic process"/>
    <property type="evidence" value="ECO:0007669"/>
    <property type="project" value="UniProtKB-KW"/>
</dbReference>
<dbReference type="GO" id="GO:0030154">
    <property type="term" value="P:cell differentiation"/>
    <property type="evidence" value="ECO:0007669"/>
    <property type="project" value="UniProtKB-KW"/>
</dbReference>
<dbReference type="GO" id="GO:0006508">
    <property type="term" value="P:proteolysis"/>
    <property type="evidence" value="ECO:0007669"/>
    <property type="project" value="UniProtKB-KW"/>
</dbReference>
<dbReference type="CDD" id="cd04269">
    <property type="entry name" value="ZnMc_adamalysin_II_like"/>
    <property type="match status" value="1"/>
</dbReference>
<dbReference type="FunFam" id="3.40.390.10:FF:000002">
    <property type="entry name" value="Disintegrin and metalloproteinase domain-containing protein 22"/>
    <property type="match status" value="1"/>
</dbReference>
<dbReference type="FunFam" id="4.10.70.10:FF:000001">
    <property type="entry name" value="Disintegrin and metalloproteinase domain-containing protein 22"/>
    <property type="match status" value="1"/>
</dbReference>
<dbReference type="Gene3D" id="3.40.390.10">
    <property type="entry name" value="Collagenase (Catalytic Domain)"/>
    <property type="match status" value="1"/>
</dbReference>
<dbReference type="Gene3D" id="4.10.70.10">
    <property type="entry name" value="Disintegrin domain"/>
    <property type="match status" value="1"/>
</dbReference>
<dbReference type="InterPro" id="IPR018358">
    <property type="entry name" value="Disintegrin_CS"/>
</dbReference>
<dbReference type="InterPro" id="IPR001762">
    <property type="entry name" value="Disintegrin_dom"/>
</dbReference>
<dbReference type="InterPro" id="IPR036436">
    <property type="entry name" value="Disintegrin_dom_sf"/>
</dbReference>
<dbReference type="InterPro" id="IPR024079">
    <property type="entry name" value="MetalloPept_cat_dom_sf"/>
</dbReference>
<dbReference type="InterPro" id="IPR001590">
    <property type="entry name" value="Peptidase_M12B"/>
</dbReference>
<dbReference type="InterPro" id="IPR002870">
    <property type="entry name" value="Peptidase_M12B_N"/>
</dbReference>
<dbReference type="InterPro" id="IPR034027">
    <property type="entry name" value="Reprolysin_adamalysin"/>
</dbReference>
<dbReference type="PANTHER" id="PTHR11905">
    <property type="entry name" value="ADAM A DISINTEGRIN AND METALLOPROTEASE DOMAIN"/>
    <property type="match status" value="1"/>
</dbReference>
<dbReference type="PANTHER" id="PTHR11905:SF32">
    <property type="entry name" value="DISINTEGRIN AND METALLOPROTEINASE DOMAIN-CONTAINING PROTEIN 28"/>
    <property type="match status" value="1"/>
</dbReference>
<dbReference type="Pfam" id="PF00200">
    <property type="entry name" value="Disintegrin"/>
    <property type="match status" value="1"/>
</dbReference>
<dbReference type="Pfam" id="PF01562">
    <property type="entry name" value="Pep_M12B_propep"/>
    <property type="match status" value="1"/>
</dbReference>
<dbReference type="Pfam" id="PF01421">
    <property type="entry name" value="Reprolysin"/>
    <property type="match status" value="1"/>
</dbReference>
<dbReference type="PRINTS" id="PR00289">
    <property type="entry name" value="DISINTEGRIN"/>
</dbReference>
<dbReference type="SMART" id="SM00050">
    <property type="entry name" value="DISIN"/>
    <property type="match status" value="1"/>
</dbReference>
<dbReference type="SUPFAM" id="SSF57552">
    <property type="entry name" value="Blood coagulation inhibitor (disintegrin)"/>
    <property type="match status" value="1"/>
</dbReference>
<dbReference type="SUPFAM" id="SSF55486">
    <property type="entry name" value="Metalloproteases ('zincins'), catalytic domain"/>
    <property type="match status" value="1"/>
</dbReference>
<dbReference type="PROSITE" id="PS50215">
    <property type="entry name" value="ADAM_MEPRO"/>
    <property type="match status" value="1"/>
</dbReference>
<dbReference type="PROSITE" id="PS00427">
    <property type="entry name" value="DISINTEGRIN_1"/>
    <property type="match status" value="1"/>
</dbReference>
<dbReference type="PROSITE" id="PS50214">
    <property type="entry name" value="DISINTEGRIN_2"/>
    <property type="match status" value="1"/>
</dbReference>
<dbReference type="PROSITE" id="PS00142">
    <property type="entry name" value="ZINC_PROTEASE"/>
    <property type="match status" value="1"/>
</dbReference>
<evidence type="ECO:0000250" key="1"/>
<evidence type="ECO:0000250" key="2">
    <source>
        <dbReference type="UniProtKB" id="Q0NZX5"/>
    </source>
</evidence>
<evidence type="ECO:0000255" key="3"/>
<evidence type="ECO:0000255" key="4">
    <source>
        <dbReference type="PROSITE-ProRule" id="PRU00068"/>
    </source>
</evidence>
<evidence type="ECO:0000255" key="5">
    <source>
        <dbReference type="PROSITE-ProRule" id="PRU00276"/>
    </source>
</evidence>
<evidence type="ECO:0000269" key="6">
    <source>
    </source>
</evidence>
<evidence type="ECO:0000269" key="7">
    <source>
    </source>
</evidence>
<evidence type="ECO:0000305" key="8"/>
<evidence type="ECO:0000305" key="9">
    <source>
    </source>
</evidence>
<proteinExistence type="evidence at transcript level"/>
<reference key="1">
    <citation type="journal article" date="2003" name="Biochem. Biophys. Res. Commun.">
        <title>cDNA cloning and characterization of Agkistin, a new metalloproteinase from Agkistrodon halys.</title>
        <authorList>
            <person name="Wang S.H."/>
            <person name="Shen X.C."/>
            <person name="Yang G.Z."/>
            <person name="Wu X.F."/>
        </authorList>
    </citation>
    <scope>NUCLEOTIDE SEQUENCE [MRNA]</scope>
    <scope>FUNCTION</scope>
    <source>
        <tissue>Venom gland</tissue>
    </source>
</reference>
<reference key="2">
    <citation type="journal article" date="2006" name="J. Cell. Biochem.">
        <title>Agkistin-s, a disintegrin domain, inhibits angiogenesis and induces BAECs apoptosis.</title>
        <authorList>
            <person name="Ren A."/>
            <person name="Wang S.H."/>
            <person name="Cai W.J."/>
            <person name="Yang G.Z."/>
            <person name="Zhu Y.C."/>
            <person name="Wu X.F."/>
            <person name="Zhang Y.Z."/>
        </authorList>
    </citation>
    <scope>FUNCTION OF DISINTEGRIN</scope>
</reference>
<protein>
    <recommendedName>
        <fullName>Zinc metalloproteinase-disintegrin agkistin</fullName>
        <ecNumber>3.4.24.-</ecNumber>
    </recommendedName>
    <alternativeName>
        <fullName>Snake venom metalloproteinase</fullName>
        <shortName>SVMP</shortName>
    </alternativeName>
</protein>
<feature type="signal peptide" evidence="3">
    <location>
        <begin position="1"/>
        <end position="20"/>
    </location>
</feature>
<feature type="propeptide" id="PRO_0000319484" evidence="1">
    <location>
        <begin position="21"/>
        <end position="195"/>
    </location>
</feature>
<feature type="chain" id="PRO_0000319485" description="Zinc metalloproteinase-disintegrin agkistin">
    <location>
        <begin position="196"/>
        <end position="488"/>
    </location>
</feature>
<feature type="domain" description="Peptidase M12B" evidence="5">
    <location>
        <begin position="198"/>
        <end position="394"/>
    </location>
</feature>
<feature type="domain" description="Disintegrin" evidence="4">
    <location>
        <begin position="404"/>
        <end position="488"/>
    </location>
</feature>
<feature type="short sequence motif" description="Cell attachment site">
    <location>
        <begin position="466"/>
        <end position="468"/>
    </location>
</feature>
<feature type="active site" evidence="5">
    <location>
        <position position="335"/>
    </location>
</feature>
<feature type="binding site" evidence="1">
    <location>
        <position position="201"/>
    </location>
    <ligand>
        <name>Ca(2+)</name>
        <dbReference type="ChEBI" id="CHEBI:29108"/>
        <label>1</label>
    </ligand>
</feature>
<feature type="binding site" evidence="1">
    <location>
        <position position="285"/>
    </location>
    <ligand>
        <name>Ca(2+)</name>
        <dbReference type="ChEBI" id="CHEBI:29108"/>
        <label>1</label>
    </ligand>
</feature>
<feature type="binding site" evidence="5">
    <location>
        <position position="334"/>
    </location>
    <ligand>
        <name>Zn(2+)</name>
        <dbReference type="ChEBI" id="CHEBI:29105"/>
        <note>catalytic</note>
    </ligand>
</feature>
<feature type="binding site" evidence="5">
    <location>
        <position position="338"/>
    </location>
    <ligand>
        <name>Zn(2+)</name>
        <dbReference type="ChEBI" id="CHEBI:29105"/>
        <note>catalytic</note>
    </ligand>
</feature>
<feature type="binding site" evidence="5">
    <location>
        <position position="344"/>
    </location>
    <ligand>
        <name>Zn(2+)</name>
        <dbReference type="ChEBI" id="CHEBI:29105"/>
        <note>catalytic</note>
    </ligand>
</feature>
<feature type="binding site" evidence="1">
    <location>
        <position position="391"/>
    </location>
    <ligand>
        <name>Ca(2+)</name>
        <dbReference type="ChEBI" id="CHEBI:29108"/>
        <label>1</label>
    </ligand>
</feature>
<feature type="binding site" evidence="1">
    <location>
        <position position="394"/>
    </location>
    <ligand>
        <name>Ca(2+)</name>
        <dbReference type="ChEBI" id="CHEBI:29108"/>
        <label>1</label>
    </ligand>
</feature>
<feature type="binding site" evidence="1">
    <location>
        <position position="406"/>
    </location>
    <ligand>
        <name>Ca(2+)</name>
        <dbReference type="ChEBI" id="CHEBI:29108"/>
        <label>2</label>
    </ligand>
</feature>
<feature type="binding site" evidence="1">
    <location>
        <position position="409"/>
    </location>
    <ligand>
        <name>Ca(2+)</name>
        <dbReference type="ChEBI" id="CHEBI:29108"/>
        <label>2</label>
    </ligand>
</feature>
<feature type="binding site" evidence="1">
    <location>
        <position position="413"/>
    </location>
    <ligand>
        <name>Ca(2+)</name>
        <dbReference type="ChEBI" id="CHEBI:29108"/>
        <label>2</label>
    </ligand>
</feature>
<feature type="binding site" evidence="1">
    <location>
        <position position="416"/>
    </location>
    <ligand>
        <name>Ca(2+)</name>
        <dbReference type="ChEBI" id="CHEBI:29108"/>
        <label>2</label>
    </ligand>
</feature>
<feature type="binding site" evidence="1">
    <location>
        <position position="419"/>
    </location>
    <ligand>
        <name>Ca(2+)</name>
        <dbReference type="ChEBI" id="CHEBI:29108"/>
        <label>2</label>
    </ligand>
</feature>
<feature type="glycosylation site" description="N-linked (GlcNAc...) asparagine" evidence="3">
    <location>
        <position position="258"/>
    </location>
</feature>
<feature type="disulfide bond" evidence="1">
    <location>
        <begin position="309"/>
        <end position="391"/>
    </location>
</feature>
<feature type="disulfide bond" evidence="5">
    <location>
        <begin position="349"/>
        <end position="373"/>
    </location>
</feature>
<feature type="disulfide bond" evidence="5">
    <location>
        <begin position="351"/>
        <end position="356"/>
    </location>
</feature>
<feature type="disulfide bond" evidence="8">
    <location>
        <begin position="407"/>
        <end position="426"/>
    </location>
</feature>
<feature type="disulfide bond" evidence="2">
    <location>
        <begin position="418"/>
        <end position="436"/>
    </location>
</feature>
<feature type="disulfide bond" evidence="2">
    <location>
        <begin position="420"/>
        <end position="431"/>
    </location>
</feature>
<feature type="disulfide bond" evidence="2">
    <location>
        <begin position="430"/>
        <end position="453"/>
    </location>
</feature>
<feature type="disulfide bond" evidence="2">
    <location>
        <begin position="444"/>
        <end position="450"/>
    </location>
</feature>
<feature type="disulfide bond" evidence="2">
    <location>
        <begin position="449"/>
        <end position="474"/>
    </location>
</feature>
<feature type="disulfide bond" evidence="2 4">
    <location>
        <begin position="462"/>
        <end position="481"/>
    </location>
</feature>
<keyword id="KW-0037">Angiogenesis</keyword>
<keyword id="KW-0053">Apoptosis</keyword>
<keyword id="KW-0106">Calcium</keyword>
<keyword id="KW-1217">Cell adhesion impairing toxin</keyword>
<keyword id="KW-0217">Developmental protein</keyword>
<keyword id="KW-0221">Differentiation</keyword>
<keyword id="KW-1015">Disulfide bond</keyword>
<keyword id="KW-0325">Glycoprotein</keyword>
<keyword id="KW-1200">Hemorrhagic toxin</keyword>
<keyword id="KW-1199">Hemostasis impairing toxin</keyword>
<keyword id="KW-0378">Hydrolase</keyword>
<keyword id="KW-0479">Metal-binding</keyword>
<keyword id="KW-0482">Metalloprotease</keyword>
<keyword id="KW-1201">Platelet aggregation inhibiting toxin</keyword>
<keyword id="KW-0645">Protease</keyword>
<keyword id="KW-0964">Secreted</keyword>
<keyword id="KW-0732">Signal</keyword>
<keyword id="KW-0800">Toxin</keyword>
<keyword id="KW-0862">Zinc</keyword>
<keyword id="KW-0865">Zymogen</keyword>
<name>VM2AG_GLOHA</name>
<organism>
    <name type="scientific">Gloydius halys</name>
    <name type="common">Chinese water mocassin</name>
    <name type="synonym">Agkistrodon halys</name>
    <dbReference type="NCBI Taxonomy" id="8714"/>
    <lineage>
        <taxon>Eukaryota</taxon>
        <taxon>Metazoa</taxon>
        <taxon>Chordata</taxon>
        <taxon>Craniata</taxon>
        <taxon>Vertebrata</taxon>
        <taxon>Euteleostomi</taxon>
        <taxon>Lepidosauria</taxon>
        <taxon>Squamata</taxon>
        <taxon>Bifurcata</taxon>
        <taxon>Unidentata</taxon>
        <taxon>Episquamata</taxon>
        <taxon>Toxicofera</taxon>
        <taxon>Serpentes</taxon>
        <taxon>Colubroidea</taxon>
        <taxon>Viperidae</taxon>
        <taxon>Crotalinae</taxon>
        <taxon>Gloydius</taxon>
    </lineage>
</organism>
<sequence length="488" mass="54841">MIQVLLVTICLAVFPYQGSSIILESGNVNDYEVVYPQKVPALPKRAVQQKYEDAMQYEFKVNGEPVVLHLEKNKGLFSEDYSETHYSPDGREITTYPPVEDHCYYHGRIENDADSTTSISACNGLKGHFKLQGETYFIESLKLPDSEAHAVFKYENVEKEDGAPKMCGVTQNWESYEPVKKASQLNFPPDGRIEFLQRYIELVIVADHRMYTKYDGDKTEISSIIYEIVNILTQNYRPMHIRVALTGLEIWSSGELSNVTLSADDTLDSFGEWRERDLLNRKRHDNAQSLTGMIFSENIEGRAYKESMCDLKRSVGIVRDYRTRRHFVANIMAHEMGHNLGIDHDRDSCTCDASSCIMSATVSNEPSSRFSDCSLNQYLSDIIHNPLASYCLYNEPSKTDIVSPPVCGNYYLEVGEDCDCGPPANCQNPCCDAATCRLTPGSQCAEGLCCEQCSFMKEGTVCRIARGDDLDDYCNGISAGCPRNPSHA</sequence>